<protein>
    <recommendedName>
        <fullName evidence="1">Fructose-1,6-bisphosphatase class 1</fullName>
        <shortName evidence="1">FBPase class 1</shortName>
        <ecNumber evidence="1">3.1.3.11</ecNumber>
    </recommendedName>
    <alternativeName>
        <fullName evidence="1">D-fructose-1,6-bisphosphate 1-phosphohydrolase class 1</fullName>
    </alternativeName>
</protein>
<evidence type="ECO:0000255" key="1">
    <source>
        <dbReference type="HAMAP-Rule" id="MF_01855"/>
    </source>
</evidence>
<organism>
    <name type="scientific">Xanthomonas campestris pv. campestris (strain B100)</name>
    <dbReference type="NCBI Taxonomy" id="509169"/>
    <lineage>
        <taxon>Bacteria</taxon>
        <taxon>Pseudomonadati</taxon>
        <taxon>Pseudomonadota</taxon>
        <taxon>Gammaproteobacteria</taxon>
        <taxon>Lysobacterales</taxon>
        <taxon>Lysobacteraceae</taxon>
        <taxon>Xanthomonas</taxon>
    </lineage>
</organism>
<gene>
    <name evidence="1" type="primary">fbp</name>
    <name type="ordered locus">xcc-b100_0105</name>
</gene>
<feature type="chain" id="PRO_0000364753" description="Fructose-1,6-bisphosphatase class 1">
    <location>
        <begin position="1"/>
        <end position="338"/>
    </location>
</feature>
<feature type="binding site" evidence="1">
    <location>
        <position position="90"/>
    </location>
    <ligand>
        <name>Mg(2+)</name>
        <dbReference type="ChEBI" id="CHEBI:18420"/>
        <label>1</label>
    </ligand>
</feature>
<feature type="binding site" evidence="1">
    <location>
        <position position="112"/>
    </location>
    <ligand>
        <name>Mg(2+)</name>
        <dbReference type="ChEBI" id="CHEBI:18420"/>
        <label>1</label>
    </ligand>
</feature>
<feature type="binding site" evidence="1">
    <location>
        <position position="112"/>
    </location>
    <ligand>
        <name>Mg(2+)</name>
        <dbReference type="ChEBI" id="CHEBI:18420"/>
        <label>2</label>
    </ligand>
</feature>
<feature type="binding site" evidence="1">
    <location>
        <position position="114"/>
    </location>
    <ligand>
        <name>Mg(2+)</name>
        <dbReference type="ChEBI" id="CHEBI:18420"/>
        <label>1</label>
    </ligand>
</feature>
<feature type="binding site" evidence="1">
    <location>
        <begin position="115"/>
        <end position="118"/>
    </location>
    <ligand>
        <name>substrate</name>
    </ligand>
</feature>
<feature type="binding site" evidence="1">
    <location>
        <position position="115"/>
    </location>
    <ligand>
        <name>Mg(2+)</name>
        <dbReference type="ChEBI" id="CHEBI:18420"/>
        <label>2</label>
    </ligand>
</feature>
<feature type="binding site" evidence="1">
    <location>
        <position position="207"/>
    </location>
    <ligand>
        <name>substrate</name>
    </ligand>
</feature>
<feature type="binding site" evidence="1">
    <location>
        <position position="273"/>
    </location>
    <ligand>
        <name>substrate</name>
    </ligand>
</feature>
<feature type="binding site" evidence="1">
    <location>
        <position position="279"/>
    </location>
    <ligand>
        <name>Mg(2+)</name>
        <dbReference type="ChEBI" id="CHEBI:18420"/>
        <label>2</label>
    </ligand>
</feature>
<accession>B0RLK6</accession>
<dbReference type="EC" id="3.1.3.11" evidence="1"/>
<dbReference type="EMBL" id="AM920689">
    <property type="protein sequence ID" value="CAP49435.1"/>
    <property type="molecule type" value="Genomic_DNA"/>
</dbReference>
<dbReference type="SMR" id="B0RLK6"/>
<dbReference type="KEGG" id="xca:xcc-b100_0105"/>
<dbReference type="HOGENOM" id="CLU_039977_0_0_6"/>
<dbReference type="UniPathway" id="UPA00138"/>
<dbReference type="Proteomes" id="UP000001188">
    <property type="component" value="Chromosome"/>
</dbReference>
<dbReference type="GO" id="GO:0005829">
    <property type="term" value="C:cytosol"/>
    <property type="evidence" value="ECO:0007669"/>
    <property type="project" value="TreeGrafter"/>
</dbReference>
<dbReference type="GO" id="GO:0042132">
    <property type="term" value="F:fructose 1,6-bisphosphate 1-phosphatase activity"/>
    <property type="evidence" value="ECO:0007669"/>
    <property type="project" value="UniProtKB-UniRule"/>
</dbReference>
<dbReference type="GO" id="GO:0000287">
    <property type="term" value="F:magnesium ion binding"/>
    <property type="evidence" value="ECO:0007669"/>
    <property type="project" value="UniProtKB-UniRule"/>
</dbReference>
<dbReference type="GO" id="GO:0030388">
    <property type="term" value="P:fructose 1,6-bisphosphate metabolic process"/>
    <property type="evidence" value="ECO:0007669"/>
    <property type="project" value="TreeGrafter"/>
</dbReference>
<dbReference type="GO" id="GO:0006002">
    <property type="term" value="P:fructose 6-phosphate metabolic process"/>
    <property type="evidence" value="ECO:0007669"/>
    <property type="project" value="TreeGrafter"/>
</dbReference>
<dbReference type="GO" id="GO:0006000">
    <property type="term" value="P:fructose metabolic process"/>
    <property type="evidence" value="ECO:0007669"/>
    <property type="project" value="TreeGrafter"/>
</dbReference>
<dbReference type="GO" id="GO:0006094">
    <property type="term" value="P:gluconeogenesis"/>
    <property type="evidence" value="ECO:0007669"/>
    <property type="project" value="UniProtKB-UniRule"/>
</dbReference>
<dbReference type="GO" id="GO:0005986">
    <property type="term" value="P:sucrose biosynthetic process"/>
    <property type="evidence" value="ECO:0007669"/>
    <property type="project" value="TreeGrafter"/>
</dbReference>
<dbReference type="CDD" id="cd00354">
    <property type="entry name" value="FBPase"/>
    <property type="match status" value="1"/>
</dbReference>
<dbReference type="FunFam" id="3.30.540.10:FF:000006">
    <property type="entry name" value="Fructose-1,6-bisphosphatase class 1"/>
    <property type="match status" value="1"/>
</dbReference>
<dbReference type="FunFam" id="3.40.190.80:FF:000011">
    <property type="entry name" value="Fructose-1,6-bisphosphatase class 1"/>
    <property type="match status" value="1"/>
</dbReference>
<dbReference type="Gene3D" id="3.40.190.80">
    <property type="match status" value="1"/>
</dbReference>
<dbReference type="Gene3D" id="3.30.540.10">
    <property type="entry name" value="Fructose-1,6-Bisphosphatase, subunit A, domain 1"/>
    <property type="match status" value="1"/>
</dbReference>
<dbReference type="HAMAP" id="MF_01855">
    <property type="entry name" value="FBPase_class1"/>
    <property type="match status" value="1"/>
</dbReference>
<dbReference type="InterPro" id="IPR044015">
    <property type="entry name" value="FBPase_C_dom"/>
</dbReference>
<dbReference type="InterPro" id="IPR000146">
    <property type="entry name" value="FBPase_class-1"/>
</dbReference>
<dbReference type="InterPro" id="IPR033391">
    <property type="entry name" value="FBPase_N"/>
</dbReference>
<dbReference type="InterPro" id="IPR028343">
    <property type="entry name" value="FBPtase"/>
</dbReference>
<dbReference type="NCBIfam" id="NF006779">
    <property type="entry name" value="PRK09293.1-3"/>
    <property type="match status" value="1"/>
</dbReference>
<dbReference type="NCBIfam" id="NF006780">
    <property type="entry name" value="PRK09293.1-4"/>
    <property type="match status" value="1"/>
</dbReference>
<dbReference type="PANTHER" id="PTHR11556">
    <property type="entry name" value="FRUCTOSE-1,6-BISPHOSPHATASE-RELATED"/>
    <property type="match status" value="1"/>
</dbReference>
<dbReference type="PANTHER" id="PTHR11556:SF35">
    <property type="entry name" value="SEDOHEPTULOSE-1,7-BISPHOSPHATASE, CHLOROPLASTIC"/>
    <property type="match status" value="1"/>
</dbReference>
<dbReference type="Pfam" id="PF00316">
    <property type="entry name" value="FBPase"/>
    <property type="match status" value="1"/>
</dbReference>
<dbReference type="Pfam" id="PF18913">
    <property type="entry name" value="FBPase_C"/>
    <property type="match status" value="1"/>
</dbReference>
<dbReference type="PIRSF" id="PIRSF500210">
    <property type="entry name" value="FBPtase"/>
    <property type="match status" value="1"/>
</dbReference>
<dbReference type="PIRSF" id="PIRSF000904">
    <property type="entry name" value="FBPtase_SBPase"/>
    <property type="match status" value="1"/>
</dbReference>
<dbReference type="PRINTS" id="PR00115">
    <property type="entry name" value="F16BPHPHTASE"/>
</dbReference>
<dbReference type="SUPFAM" id="SSF56655">
    <property type="entry name" value="Carbohydrate phosphatase"/>
    <property type="match status" value="1"/>
</dbReference>
<comment type="catalytic activity">
    <reaction evidence="1">
        <text>beta-D-fructose 1,6-bisphosphate + H2O = beta-D-fructose 6-phosphate + phosphate</text>
        <dbReference type="Rhea" id="RHEA:11064"/>
        <dbReference type="ChEBI" id="CHEBI:15377"/>
        <dbReference type="ChEBI" id="CHEBI:32966"/>
        <dbReference type="ChEBI" id="CHEBI:43474"/>
        <dbReference type="ChEBI" id="CHEBI:57634"/>
        <dbReference type="EC" id="3.1.3.11"/>
    </reaction>
</comment>
<comment type="cofactor">
    <cofactor evidence="1">
        <name>Mg(2+)</name>
        <dbReference type="ChEBI" id="CHEBI:18420"/>
    </cofactor>
    <text evidence="1">Binds 2 magnesium ions per subunit.</text>
</comment>
<comment type="pathway">
    <text evidence="1">Carbohydrate biosynthesis; gluconeogenesis.</text>
</comment>
<comment type="subunit">
    <text evidence="1">Homotetramer.</text>
</comment>
<comment type="subcellular location">
    <subcellularLocation>
        <location evidence="1">Cytoplasm</location>
    </subcellularLocation>
</comment>
<comment type="similarity">
    <text evidence="1">Belongs to the FBPase class 1 family.</text>
</comment>
<proteinExistence type="inferred from homology"/>
<name>F16PA_XANCB</name>
<reference key="1">
    <citation type="journal article" date="2008" name="J. Biotechnol.">
        <title>The genome of Xanthomonas campestris pv. campestris B100 and its use for the reconstruction of metabolic pathways involved in xanthan biosynthesis.</title>
        <authorList>
            <person name="Vorhoelter F.-J."/>
            <person name="Schneiker S."/>
            <person name="Goesmann A."/>
            <person name="Krause L."/>
            <person name="Bekel T."/>
            <person name="Kaiser O."/>
            <person name="Linke B."/>
            <person name="Patschkowski T."/>
            <person name="Rueckert C."/>
            <person name="Schmid J."/>
            <person name="Sidhu V.K."/>
            <person name="Sieber V."/>
            <person name="Tauch A."/>
            <person name="Watt S.A."/>
            <person name="Weisshaar B."/>
            <person name="Becker A."/>
            <person name="Niehaus K."/>
            <person name="Puehler A."/>
        </authorList>
    </citation>
    <scope>NUCLEOTIDE SEQUENCE [LARGE SCALE GENOMIC DNA]</scope>
    <source>
        <strain>B100</strain>
    </source>
</reference>
<keyword id="KW-0119">Carbohydrate metabolism</keyword>
<keyword id="KW-0963">Cytoplasm</keyword>
<keyword id="KW-0378">Hydrolase</keyword>
<keyword id="KW-0460">Magnesium</keyword>
<keyword id="KW-0479">Metal-binding</keyword>
<sequence length="338" mass="36854">MSRPSLTRFLIEEQHAGRIDPELRQLITIVSRACKRISIAVSKGALGGVLGDAGTGNVQGEAQKKLDVLSNDILLEANAWGGHLAACASEEMDHSQPVPDQYPSGDFLLLFDPLDGSSNIDVNVSVGTIFSVLRAPKGTEKPGDEHFLQPGTQQVAAGYCIYGPSTMLVLTLGHGTHAFTLEREEGSFLLTQADMRVPEDTAEFAINMSNQRHWEPAMQAYVGDLLAGKDGARGKDFNMRWIASMVADVHRILTRGGIFIYPWDKKDAAKPGKLRLMYEANPMGMLVEQAGGAATTGRERILDIQPTQLHQRVPVFLGSKNEVAEATRYHVEFDKAQG</sequence>